<protein>
    <recommendedName>
        <fullName>Elongation factor 2</fullName>
        <shortName>EF-2</shortName>
        <ecNumber evidence="1">3.6.5.-</ecNumber>
    </recommendedName>
</protein>
<accession>Q754C8</accession>
<accession>Q6JEG2</accession>
<keyword id="KW-0963">Cytoplasm</keyword>
<keyword id="KW-0251">Elongation factor</keyword>
<keyword id="KW-0342">GTP-binding</keyword>
<keyword id="KW-0378">Hydrolase</keyword>
<keyword id="KW-0547">Nucleotide-binding</keyword>
<keyword id="KW-0648">Protein biosynthesis</keyword>
<keyword id="KW-1185">Reference proteome</keyword>
<proteinExistence type="inferred from homology"/>
<comment type="function">
    <text evidence="1">Catalyzes the GTP-dependent ribosomal translocation step during translation elongation. During this step, the ribosome changes from the pre-translocational (PRE) to the post-translocational (POST) state as the newly formed A-site-bound peptidyl-tRNA and P-site-bound deacylated tRNA move to the P and E sites, respectively. Catalyzes the coordinated movement of the two tRNA molecules, the mRNA and conformational changes in the ribosome.</text>
</comment>
<comment type="catalytic activity">
    <reaction evidence="1">
        <text>GTP + H2O = GDP + phosphate + H(+)</text>
        <dbReference type="Rhea" id="RHEA:19669"/>
        <dbReference type="ChEBI" id="CHEBI:15377"/>
        <dbReference type="ChEBI" id="CHEBI:15378"/>
        <dbReference type="ChEBI" id="CHEBI:37565"/>
        <dbReference type="ChEBI" id="CHEBI:43474"/>
        <dbReference type="ChEBI" id="CHEBI:58189"/>
    </reaction>
    <physiologicalReaction direction="left-to-right" evidence="1">
        <dbReference type="Rhea" id="RHEA:19670"/>
    </physiologicalReaction>
</comment>
<comment type="subcellular location">
    <subcellularLocation>
        <location evidence="1">Cytoplasm</location>
    </subcellularLocation>
</comment>
<comment type="similarity">
    <text evidence="2">Belongs to the TRAFAC class translation factor GTPase superfamily. Classic translation factor GTPase family. EF-G/EF-2 subfamily.</text>
</comment>
<sequence>MVAFTVDQIRSLMDKVTNVRNMSVIAHVDHGKSTLTDSLVQRAGIISAAKAGEARFTDTRKDEQERGITIKSTAISLFSEMSEEDVKDIKQKTEGNSFLINLIDSPGHVDFSSEVTAALRVTDGALVVVDTVEGVCVQTETVLRQALGERIKPVVVINKVDRALLELQVSKEDLYQSFSRTVESVNVIISTYADEVLGDVQVYPQKGTVAFGSGLHGWAFTIRQFANRYSKKFGVDREKMMERLWGDSYFNPKTKKWTNKDRDADGKPLERAFNMFVLDPIFRLFAAIMNFKKDEIPVLLEKLEIALKSDERDLEGKALLKVVMRKFLPAADALLEMIIMHLPSPVTAQNYRAEQLYEGPSDDPACIAIKNCDPKADLMLYVSKMVPTSDKGRFYAFGRVFSGTVKSGQKVRIQGPSFTVGKKEDLFIKAIQRAVLMMGRFVEPIDDCPAGNIVGLVGIDQFLLKTGTLTTFESAHNMKVMKFSVSPVVQVAVEVKNANDLPKLVEGLKRLSKSDPCVLTYMSESGEHIVAGTGELHLEICLQDLENDHAGIPLKISPPVVAYRETVEGESSQVALSKSPNKHNRIYLKAQPIDEEVSLAIEGGKINPRDDFKARARVMADEYGWDVTDARKIWCFGPDGNGPNLVVDQTKAVQYLNEIKDSVVSAFQWATKEGPIFGEQMRSVRINLLDVTLHADAIHRGAGQIMPTMRRATYAGFLLAEPKIQEPVFLVEIQCPEQAVGGIYSVLNRKRGQVVSEEQRPGTPLFTVKAYLPVNESFGFTGELRQATGGQAFPQMVFDHWATLGTDPLDPTTKAGEIVVEARKRHGLKENVPGWQEYYDKL</sequence>
<reference key="1">
    <citation type="journal article" date="2004" name="Science">
        <title>The Ashbya gossypii genome as a tool for mapping the ancient Saccharomyces cerevisiae genome.</title>
        <authorList>
            <person name="Dietrich F.S."/>
            <person name="Voegeli S."/>
            <person name="Brachat S."/>
            <person name="Lerch A."/>
            <person name="Gates K."/>
            <person name="Steiner S."/>
            <person name="Mohr C."/>
            <person name="Poehlmann R."/>
            <person name="Luedi P."/>
            <person name="Choi S."/>
            <person name="Wing R.A."/>
            <person name="Flavier A."/>
            <person name="Gaffney T.D."/>
            <person name="Philippsen P."/>
        </authorList>
    </citation>
    <scope>NUCLEOTIDE SEQUENCE [LARGE SCALE GENOMIC DNA]</scope>
    <source>
        <strain>ATCC 10895 / CBS 109.51 / FGSC 9923 / NRRL Y-1056</strain>
    </source>
</reference>
<reference key="2">
    <citation type="journal article" date="2013" name="G3 (Bethesda)">
        <title>Genomes of Ashbya fungi isolated from insects reveal four mating-type loci, numerous translocations, lack of transposons, and distinct gene duplications.</title>
        <authorList>
            <person name="Dietrich F.S."/>
            <person name="Voegeli S."/>
            <person name="Kuo S."/>
            <person name="Philippsen P."/>
        </authorList>
    </citation>
    <scope>GENOME REANNOTATION</scope>
    <source>
        <strain>ATCC 10895 / CBS 109.51 / FGSC 9923 / NRRL Y-1056</strain>
    </source>
</reference>
<reference key="3">
    <citation type="submission" date="2003-12" db="EMBL/GenBank/DDBJ databases">
        <title>Molecular phylogeny and evolution of Candida and related species within the order saccharomycetales as inferred from multilocus sequence analysis.</title>
        <authorList>
            <person name="Diezmann S."/>
            <person name="Cox C.J."/>
            <person name="Schoenian G."/>
            <person name="Vilgalys R.J."/>
            <person name="Mitchell T.G."/>
        </authorList>
    </citation>
    <scope>NUCLEOTIDE SEQUENCE [GENOMIC DNA] OF 586-786</scope>
    <source>
        <strain>ATCC 8717 / IMI 31268</strain>
    </source>
</reference>
<gene>
    <name type="primary">EFT1</name>
    <name type="ordered locus">AFR142C</name>
</gene>
<evidence type="ECO:0000250" key="1">
    <source>
        <dbReference type="UniProtKB" id="P32324"/>
    </source>
</evidence>
<evidence type="ECO:0000255" key="2">
    <source>
        <dbReference type="PROSITE-ProRule" id="PRU01059"/>
    </source>
</evidence>
<name>EF2_EREGS</name>
<dbReference type="EC" id="3.6.5.-" evidence="1"/>
<dbReference type="EMBL" id="AE016819">
    <property type="protein sequence ID" value="AAS53513.1"/>
    <property type="molecule type" value="Genomic_DNA"/>
</dbReference>
<dbReference type="EMBL" id="AY497630">
    <property type="protein sequence ID" value="AAT12544.1"/>
    <property type="molecule type" value="Genomic_DNA"/>
</dbReference>
<dbReference type="RefSeq" id="NP_985689.1">
    <property type="nucleotide sequence ID" value="NM_211043.1"/>
</dbReference>
<dbReference type="SMR" id="Q754C8"/>
<dbReference type="FunCoup" id="Q754C8">
    <property type="interactions" value="1320"/>
</dbReference>
<dbReference type="STRING" id="284811.Q754C8"/>
<dbReference type="EnsemblFungi" id="AAS53513">
    <property type="protein sequence ID" value="AAS53513"/>
    <property type="gene ID" value="AGOS_AFR142C"/>
</dbReference>
<dbReference type="GeneID" id="4621940"/>
<dbReference type="KEGG" id="ago:AGOS_AFR142C"/>
<dbReference type="eggNOG" id="KOG0469">
    <property type="taxonomic scope" value="Eukaryota"/>
</dbReference>
<dbReference type="HOGENOM" id="CLU_002794_11_2_1"/>
<dbReference type="InParanoid" id="Q754C8"/>
<dbReference type="OMA" id="ASWNTEN"/>
<dbReference type="OrthoDB" id="364892at2759"/>
<dbReference type="Proteomes" id="UP000000591">
    <property type="component" value="Chromosome VI"/>
</dbReference>
<dbReference type="GO" id="GO:0005829">
    <property type="term" value="C:cytosol"/>
    <property type="evidence" value="ECO:0000318"/>
    <property type="project" value="GO_Central"/>
</dbReference>
<dbReference type="GO" id="GO:1990904">
    <property type="term" value="C:ribonucleoprotein complex"/>
    <property type="evidence" value="ECO:0000318"/>
    <property type="project" value="GO_Central"/>
</dbReference>
<dbReference type="GO" id="GO:0005525">
    <property type="term" value="F:GTP binding"/>
    <property type="evidence" value="ECO:0007669"/>
    <property type="project" value="UniProtKB-KW"/>
</dbReference>
<dbReference type="GO" id="GO:0003924">
    <property type="term" value="F:GTPase activity"/>
    <property type="evidence" value="ECO:0000318"/>
    <property type="project" value="GO_Central"/>
</dbReference>
<dbReference type="GO" id="GO:0043022">
    <property type="term" value="F:ribosome binding"/>
    <property type="evidence" value="ECO:0000318"/>
    <property type="project" value="GO_Central"/>
</dbReference>
<dbReference type="GO" id="GO:0003746">
    <property type="term" value="F:translation elongation factor activity"/>
    <property type="evidence" value="ECO:0000318"/>
    <property type="project" value="GO_Central"/>
</dbReference>
<dbReference type="GO" id="GO:0006414">
    <property type="term" value="P:translational elongation"/>
    <property type="evidence" value="ECO:0000318"/>
    <property type="project" value="GO_Central"/>
</dbReference>
<dbReference type="CDD" id="cd01681">
    <property type="entry name" value="aeEF2_snRNP_like_IV"/>
    <property type="match status" value="1"/>
</dbReference>
<dbReference type="CDD" id="cd04096">
    <property type="entry name" value="eEF2_snRNP_like_C"/>
    <property type="match status" value="1"/>
</dbReference>
<dbReference type="CDD" id="cd01885">
    <property type="entry name" value="EF2"/>
    <property type="match status" value="1"/>
</dbReference>
<dbReference type="CDD" id="cd16261">
    <property type="entry name" value="EF2_snRNP_III"/>
    <property type="match status" value="1"/>
</dbReference>
<dbReference type="CDD" id="cd03700">
    <property type="entry name" value="EF2_snRNP_like_II"/>
    <property type="match status" value="1"/>
</dbReference>
<dbReference type="FunFam" id="2.40.30.10:FF:000010">
    <property type="entry name" value="Translation elongation factor 2"/>
    <property type="match status" value="1"/>
</dbReference>
<dbReference type="FunFam" id="3.30.230.10:FF:000006">
    <property type="entry name" value="Translation elongation factor 2"/>
    <property type="match status" value="1"/>
</dbReference>
<dbReference type="FunFam" id="3.30.70.240:FF:000003">
    <property type="entry name" value="Translation elongation factor 2"/>
    <property type="match status" value="1"/>
</dbReference>
<dbReference type="FunFam" id="3.30.70.870:FF:000002">
    <property type="entry name" value="Translation elongation factor 2"/>
    <property type="match status" value="1"/>
</dbReference>
<dbReference type="FunFam" id="3.40.50.300:FF:000058">
    <property type="entry name" value="Translation elongation factor 2"/>
    <property type="match status" value="1"/>
</dbReference>
<dbReference type="Gene3D" id="3.30.230.10">
    <property type="match status" value="1"/>
</dbReference>
<dbReference type="Gene3D" id="3.30.70.240">
    <property type="match status" value="1"/>
</dbReference>
<dbReference type="Gene3D" id="3.30.70.870">
    <property type="entry name" value="Elongation Factor G (Translational Gtpase), domain 3"/>
    <property type="match status" value="1"/>
</dbReference>
<dbReference type="Gene3D" id="3.40.50.300">
    <property type="entry name" value="P-loop containing nucleotide triphosphate hydrolases"/>
    <property type="match status" value="1"/>
</dbReference>
<dbReference type="Gene3D" id="2.40.30.10">
    <property type="entry name" value="Translation factors"/>
    <property type="match status" value="1"/>
</dbReference>
<dbReference type="InterPro" id="IPR041095">
    <property type="entry name" value="EFG_II"/>
</dbReference>
<dbReference type="InterPro" id="IPR035647">
    <property type="entry name" value="EFG_III/V"/>
</dbReference>
<dbReference type="InterPro" id="IPR000640">
    <property type="entry name" value="EFG_V-like"/>
</dbReference>
<dbReference type="InterPro" id="IPR004161">
    <property type="entry name" value="EFTu-like_2"/>
</dbReference>
<dbReference type="InterPro" id="IPR031157">
    <property type="entry name" value="G_TR_CS"/>
</dbReference>
<dbReference type="InterPro" id="IPR027417">
    <property type="entry name" value="P-loop_NTPase"/>
</dbReference>
<dbReference type="InterPro" id="IPR020568">
    <property type="entry name" value="Ribosomal_Su5_D2-typ_SF"/>
</dbReference>
<dbReference type="InterPro" id="IPR014721">
    <property type="entry name" value="Ribsml_uS5_D2-typ_fold_subgr"/>
</dbReference>
<dbReference type="InterPro" id="IPR005225">
    <property type="entry name" value="Small_GTP-bd"/>
</dbReference>
<dbReference type="InterPro" id="IPR000795">
    <property type="entry name" value="T_Tr_GTP-bd_dom"/>
</dbReference>
<dbReference type="InterPro" id="IPR009000">
    <property type="entry name" value="Transl_B-barrel_sf"/>
</dbReference>
<dbReference type="InterPro" id="IPR005517">
    <property type="entry name" value="Transl_elong_EFG/EF2_IV"/>
</dbReference>
<dbReference type="NCBIfam" id="TIGR00231">
    <property type="entry name" value="small_GTP"/>
    <property type="match status" value="1"/>
</dbReference>
<dbReference type="PANTHER" id="PTHR42908:SF10">
    <property type="entry name" value="EUKARYOTIC TRANSLATION ELONGATION FACTOR 2"/>
    <property type="match status" value="1"/>
</dbReference>
<dbReference type="PANTHER" id="PTHR42908">
    <property type="entry name" value="TRANSLATION ELONGATION FACTOR-RELATED"/>
    <property type="match status" value="1"/>
</dbReference>
<dbReference type="Pfam" id="PF00679">
    <property type="entry name" value="EFG_C"/>
    <property type="match status" value="1"/>
</dbReference>
<dbReference type="Pfam" id="PF14492">
    <property type="entry name" value="EFG_III"/>
    <property type="match status" value="1"/>
</dbReference>
<dbReference type="Pfam" id="PF03764">
    <property type="entry name" value="EFG_IV"/>
    <property type="match status" value="1"/>
</dbReference>
<dbReference type="Pfam" id="PF00009">
    <property type="entry name" value="GTP_EFTU"/>
    <property type="match status" value="1"/>
</dbReference>
<dbReference type="Pfam" id="PF03144">
    <property type="entry name" value="GTP_EFTU_D2"/>
    <property type="match status" value="1"/>
</dbReference>
<dbReference type="PRINTS" id="PR00315">
    <property type="entry name" value="ELONGATNFCT"/>
</dbReference>
<dbReference type="SMART" id="SM00838">
    <property type="entry name" value="EFG_C"/>
    <property type="match status" value="1"/>
</dbReference>
<dbReference type="SMART" id="SM00889">
    <property type="entry name" value="EFG_IV"/>
    <property type="match status" value="1"/>
</dbReference>
<dbReference type="SUPFAM" id="SSF54980">
    <property type="entry name" value="EF-G C-terminal domain-like"/>
    <property type="match status" value="2"/>
</dbReference>
<dbReference type="SUPFAM" id="SSF52540">
    <property type="entry name" value="P-loop containing nucleoside triphosphate hydrolases"/>
    <property type="match status" value="1"/>
</dbReference>
<dbReference type="SUPFAM" id="SSF54211">
    <property type="entry name" value="Ribosomal protein S5 domain 2-like"/>
    <property type="match status" value="1"/>
</dbReference>
<dbReference type="SUPFAM" id="SSF50447">
    <property type="entry name" value="Translation proteins"/>
    <property type="match status" value="1"/>
</dbReference>
<dbReference type="PROSITE" id="PS00301">
    <property type="entry name" value="G_TR_1"/>
    <property type="match status" value="1"/>
</dbReference>
<dbReference type="PROSITE" id="PS51722">
    <property type="entry name" value="G_TR_2"/>
    <property type="match status" value="1"/>
</dbReference>
<feature type="chain" id="PRO_0000091014" description="Elongation factor 2">
    <location>
        <begin position="1"/>
        <end position="842"/>
    </location>
</feature>
<feature type="domain" description="tr-type G" evidence="2">
    <location>
        <begin position="17"/>
        <end position="253"/>
    </location>
</feature>
<feature type="binding site" evidence="1">
    <location>
        <begin position="26"/>
        <end position="33"/>
    </location>
    <ligand>
        <name>GTP</name>
        <dbReference type="ChEBI" id="CHEBI:37565"/>
    </ligand>
</feature>
<feature type="binding site" evidence="1">
    <location>
        <begin position="158"/>
        <end position="161"/>
    </location>
    <ligand>
        <name>GTP</name>
        <dbReference type="ChEBI" id="CHEBI:37565"/>
    </ligand>
</feature>
<feature type="binding site" evidence="1">
    <location>
        <begin position="213"/>
        <end position="215"/>
    </location>
    <ligand>
        <name>GTP</name>
        <dbReference type="ChEBI" id="CHEBI:37565"/>
    </ligand>
</feature>
<feature type="modified residue" description="Diphthamide" evidence="1">
    <location>
        <position position="699"/>
    </location>
</feature>
<organism>
    <name type="scientific">Eremothecium gossypii (strain ATCC 10895 / CBS 109.51 / FGSC 9923 / NRRL Y-1056)</name>
    <name type="common">Yeast</name>
    <name type="synonym">Ashbya gossypii</name>
    <dbReference type="NCBI Taxonomy" id="284811"/>
    <lineage>
        <taxon>Eukaryota</taxon>
        <taxon>Fungi</taxon>
        <taxon>Dikarya</taxon>
        <taxon>Ascomycota</taxon>
        <taxon>Saccharomycotina</taxon>
        <taxon>Saccharomycetes</taxon>
        <taxon>Saccharomycetales</taxon>
        <taxon>Saccharomycetaceae</taxon>
        <taxon>Eremothecium</taxon>
    </lineage>
</organism>